<dbReference type="EMBL" id="CP000243">
    <property type="status" value="NOT_ANNOTATED_CDS"/>
    <property type="molecule type" value="Genomic_DNA"/>
</dbReference>
<dbReference type="RefSeq" id="WP_000710769.1">
    <property type="nucleotide sequence ID" value="NZ_CP064825.1"/>
</dbReference>
<dbReference type="SMR" id="P0C203"/>
<dbReference type="GeneID" id="93777962"/>
<dbReference type="Proteomes" id="UP000001952">
    <property type="component" value="Chromosome"/>
</dbReference>
<dbReference type="GO" id="GO:1990904">
    <property type="term" value="C:ribonucleoprotein complex"/>
    <property type="evidence" value="ECO:0007669"/>
    <property type="project" value="UniProtKB-KW"/>
</dbReference>
<dbReference type="GO" id="GO:0005840">
    <property type="term" value="C:ribosome"/>
    <property type="evidence" value="ECO:0007669"/>
    <property type="project" value="UniProtKB-KW"/>
</dbReference>
<dbReference type="GO" id="GO:0046872">
    <property type="term" value="F:metal ion binding"/>
    <property type="evidence" value="ECO:0007669"/>
    <property type="project" value="UniProtKB-KW"/>
</dbReference>
<dbReference type="GO" id="GO:0019843">
    <property type="term" value="F:rRNA binding"/>
    <property type="evidence" value="ECO:0007669"/>
    <property type="project" value="UniProtKB-KW"/>
</dbReference>
<dbReference type="GO" id="GO:0003735">
    <property type="term" value="F:structural constituent of ribosome"/>
    <property type="evidence" value="ECO:0007669"/>
    <property type="project" value="InterPro"/>
</dbReference>
<dbReference type="GO" id="GO:0006412">
    <property type="term" value="P:translation"/>
    <property type="evidence" value="ECO:0007669"/>
    <property type="project" value="UniProtKB-UniRule"/>
</dbReference>
<dbReference type="FunFam" id="4.10.830.30:FF:000001">
    <property type="entry name" value="50S ribosomal protein L31"/>
    <property type="match status" value="1"/>
</dbReference>
<dbReference type="Gene3D" id="4.10.830.30">
    <property type="entry name" value="Ribosomal protein L31"/>
    <property type="match status" value="1"/>
</dbReference>
<dbReference type="HAMAP" id="MF_00501">
    <property type="entry name" value="Ribosomal_bL31_1"/>
    <property type="match status" value="1"/>
</dbReference>
<dbReference type="InterPro" id="IPR034704">
    <property type="entry name" value="Ribosomal_bL28/bL31-like_sf"/>
</dbReference>
<dbReference type="InterPro" id="IPR002150">
    <property type="entry name" value="Ribosomal_bL31"/>
</dbReference>
<dbReference type="InterPro" id="IPR027491">
    <property type="entry name" value="Ribosomal_bL31_A"/>
</dbReference>
<dbReference type="InterPro" id="IPR042105">
    <property type="entry name" value="Ribosomal_bL31_sf"/>
</dbReference>
<dbReference type="NCBIfam" id="TIGR00105">
    <property type="entry name" value="L31"/>
    <property type="match status" value="1"/>
</dbReference>
<dbReference type="NCBIfam" id="NF000612">
    <property type="entry name" value="PRK00019.1"/>
    <property type="match status" value="1"/>
</dbReference>
<dbReference type="NCBIfam" id="NF001809">
    <property type="entry name" value="PRK00528.1"/>
    <property type="match status" value="1"/>
</dbReference>
<dbReference type="PANTHER" id="PTHR33280">
    <property type="entry name" value="50S RIBOSOMAL PROTEIN L31, CHLOROPLASTIC"/>
    <property type="match status" value="1"/>
</dbReference>
<dbReference type="PANTHER" id="PTHR33280:SF6">
    <property type="entry name" value="LARGE RIBOSOMAL SUBUNIT PROTEIN BL31A"/>
    <property type="match status" value="1"/>
</dbReference>
<dbReference type="Pfam" id="PF01197">
    <property type="entry name" value="Ribosomal_L31"/>
    <property type="match status" value="1"/>
</dbReference>
<dbReference type="PRINTS" id="PR01249">
    <property type="entry name" value="RIBOSOMALL31"/>
</dbReference>
<dbReference type="SUPFAM" id="SSF143800">
    <property type="entry name" value="L28p-like"/>
    <property type="match status" value="1"/>
</dbReference>
<dbReference type="PROSITE" id="PS01143">
    <property type="entry name" value="RIBOSOMAL_L31"/>
    <property type="match status" value="1"/>
</dbReference>
<evidence type="ECO:0000250" key="1"/>
<evidence type="ECO:0000305" key="2"/>
<gene>
    <name type="primary">rpmE</name>
    <name type="ordered locus">UTI89_C4521.1</name>
</gene>
<comment type="function">
    <text evidence="1">Binds the 23S rRNA.</text>
</comment>
<comment type="cofactor">
    <cofactor evidence="1">
        <name>Zn(2+)</name>
        <dbReference type="ChEBI" id="CHEBI:29105"/>
    </cofactor>
    <text evidence="1">Binds 1 zinc ion per subunit.</text>
</comment>
<comment type="subunit">
    <text evidence="1">Part of the 50S ribosomal subunit.</text>
</comment>
<comment type="similarity">
    <text evidence="2">Belongs to the bacterial ribosomal protein bL31 family. Type A subfamily.</text>
</comment>
<organism>
    <name type="scientific">Escherichia coli (strain UTI89 / UPEC)</name>
    <dbReference type="NCBI Taxonomy" id="364106"/>
    <lineage>
        <taxon>Bacteria</taxon>
        <taxon>Pseudomonadati</taxon>
        <taxon>Pseudomonadota</taxon>
        <taxon>Gammaproteobacteria</taxon>
        <taxon>Enterobacterales</taxon>
        <taxon>Enterobacteriaceae</taxon>
        <taxon>Escherichia</taxon>
    </lineage>
</organism>
<protein>
    <recommendedName>
        <fullName evidence="2">Large ribosomal subunit protein bL31</fullName>
    </recommendedName>
    <alternativeName>
        <fullName>50S ribosomal protein L31</fullName>
    </alternativeName>
</protein>
<reference key="1">
    <citation type="journal article" date="2006" name="Proc. Natl. Acad. Sci. U.S.A.">
        <title>Identification of genes subject to positive selection in uropathogenic strains of Escherichia coli: a comparative genomics approach.</title>
        <authorList>
            <person name="Chen S.L."/>
            <person name="Hung C.-S."/>
            <person name="Xu J."/>
            <person name="Reigstad C.S."/>
            <person name="Magrini V."/>
            <person name="Sabo A."/>
            <person name="Blasiar D."/>
            <person name="Bieri T."/>
            <person name="Meyer R.R."/>
            <person name="Ozersky P."/>
            <person name="Armstrong J.R."/>
            <person name="Fulton R.S."/>
            <person name="Latreille J.P."/>
            <person name="Spieth J."/>
            <person name="Hooton T.M."/>
            <person name="Mardis E.R."/>
            <person name="Hultgren S.J."/>
            <person name="Gordon J.I."/>
        </authorList>
    </citation>
    <scope>NUCLEOTIDE SEQUENCE [LARGE SCALE GENOMIC DNA]</scope>
    <source>
        <strain>UTI89 / UPEC</strain>
    </source>
</reference>
<feature type="chain" id="PRO_0000259185" description="Large ribosomal subunit protein bL31">
    <location>
        <begin position="1"/>
        <end position="70"/>
    </location>
</feature>
<feature type="binding site" evidence="1">
    <location>
        <position position="16"/>
    </location>
    <ligand>
        <name>Zn(2+)</name>
        <dbReference type="ChEBI" id="CHEBI:29105"/>
    </ligand>
</feature>
<feature type="binding site" evidence="1">
    <location>
        <position position="18"/>
    </location>
    <ligand>
        <name>Zn(2+)</name>
        <dbReference type="ChEBI" id="CHEBI:29105"/>
    </ligand>
</feature>
<feature type="binding site" evidence="1">
    <location>
        <position position="37"/>
    </location>
    <ligand>
        <name>Zn(2+)</name>
        <dbReference type="ChEBI" id="CHEBI:29105"/>
    </ligand>
</feature>
<feature type="binding site" evidence="1">
    <location>
        <position position="40"/>
    </location>
    <ligand>
        <name>Zn(2+)</name>
        <dbReference type="ChEBI" id="CHEBI:29105"/>
    </ligand>
</feature>
<feature type="modified residue" description="N6-acetyllysine" evidence="1">
    <location>
        <position position="8"/>
    </location>
</feature>
<proteinExistence type="inferred from homology"/>
<sequence>MKKDIHPKYEEITASCSCGNVMKIRSTVGHDLNLDVCSKCHPFFTGKQRDVATGGRVDRFNKRFNIPGSK</sequence>
<accession>P0C203</accession>
<name>RL31_ECOUT</name>
<keyword id="KW-0007">Acetylation</keyword>
<keyword id="KW-0479">Metal-binding</keyword>
<keyword id="KW-0687">Ribonucleoprotein</keyword>
<keyword id="KW-0689">Ribosomal protein</keyword>
<keyword id="KW-0694">RNA-binding</keyword>
<keyword id="KW-0699">rRNA-binding</keyword>
<keyword id="KW-0862">Zinc</keyword>